<dbReference type="EC" id="4.2.3.-" evidence="6"/>
<dbReference type="EMBL" id="MK140602">
    <property type="protein sequence ID" value="AZQ56744.1"/>
    <property type="molecule type" value="Genomic_DNA"/>
</dbReference>
<dbReference type="SMR" id="A0A3Q9FFM1"/>
<dbReference type="UniPathway" id="UPA00213"/>
<dbReference type="GO" id="GO:0016829">
    <property type="term" value="F:lyase activity"/>
    <property type="evidence" value="ECO:0007669"/>
    <property type="project" value="UniProtKB-KW"/>
</dbReference>
<dbReference type="GO" id="GO:0046872">
    <property type="term" value="F:metal ion binding"/>
    <property type="evidence" value="ECO:0007669"/>
    <property type="project" value="UniProtKB-KW"/>
</dbReference>
<dbReference type="GO" id="GO:0004659">
    <property type="term" value="F:prenyltransferase activity"/>
    <property type="evidence" value="ECO:0007669"/>
    <property type="project" value="InterPro"/>
</dbReference>
<dbReference type="GO" id="GO:0046165">
    <property type="term" value="P:alcohol biosynthetic process"/>
    <property type="evidence" value="ECO:0007669"/>
    <property type="project" value="UniProtKB-ARBA"/>
</dbReference>
<dbReference type="GO" id="GO:0043386">
    <property type="term" value="P:mycotoxin biosynthetic process"/>
    <property type="evidence" value="ECO:0007669"/>
    <property type="project" value="UniProtKB-ARBA"/>
</dbReference>
<dbReference type="GO" id="GO:0016114">
    <property type="term" value="P:terpenoid biosynthetic process"/>
    <property type="evidence" value="ECO:0007669"/>
    <property type="project" value="UniProtKB-UniPathway"/>
</dbReference>
<dbReference type="CDD" id="cd00685">
    <property type="entry name" value="Trans_IPPS_HT"/>
    <property type="match status" value="1"/>
</dbReference>
<dbReference type="Gene3D" id="1.10.600.10">
    <property type="entry name" value="Farnesyl Diphosphate Synthase"/>
    <property type="match status" value="2"/>
</dbReference>
<dbReference type="InterPro" id="IPR008949">
    <property type="entry name" value="Isoprenoid_synthase_dom_sf"/>
</dbReference>
<dbReference type="InterPro" id="IPR000092">
    <property type="entry name" value="Polyprenyl_synt"/>
</dbReference>
<dbReference type="InterPro" id="IPR033749">
    <property type="entry name" value="Polyprenyl_synt_CS"/>
</dbReference>
<dbReference type="PANTHER" id="PTHR12001">
    <property type="entry name" value="GERANYLGERANYL PYROPHOSPHATE SYNTHASE"/>
    <property type="match status" value="1"/>
</dbReference>
<dbReference type="PANTHER" id="PTHR12001:SF72">
    <property type="entry name" value="THIJ_PFPI FAMILY PROTEIN (AFU_ORTHOLOGUE AFUA_3G01210)-RELATED"/>
    <property type="match status" value="1"/>
</dbReference>
<dbReference type="Pfam" id="PF00348">
    <property type="entry name" value="polyprenyl_synt"/>
    <property type="match status" value="1"/>
</dbReference>
<dbReference type="Pfam" id="PF19086">
    <property type="entry name" value="Terpene_syn_C_2"/>
    <property type="match status" value="1"/>
</dbReference>
<dbReference type="SFLD" id="SFLDS00005">
    <property type="entry name" value="Isoprenoid_Synthase_Type_I"/>
    <property type="match status" value="1"/>
</dbReference>
<dbReference type="SUPFAM" id="SSF48576">
    <property type="entry name" value="Terpenoid synthases"/>
    <property type="match status" value="2"/>
</dbReference>
<dbReference type="PROSITE" id="PS00723">
    <property type="entry name" value="POLYPRENYL_SYNTHASE_1"/>
    <property type="match status" value="1"/>
</dbReference>
<dbReference type="PROSITE" id="PS00444">
    <property type="entry name" value="POLYPRENYL_SYNTHASE_2"/>
    <property type="match status" value="1"/>
</dbReference>
<name>ASTC_TALWO</name>
<proteinExistence type="evidence at protein level"/>
<comment type="function">
    <text evidence="6">Bifunctional sesterterpene synthase; part of the gene cluster that mediates the biosynthesis of the asperterpenoids, sesterterpenes that exhibit anti-tuberculosis activity (PubMed:30548032). The first step of the pathway is performed by the sesterterpene synthase astC that possesses both prenyl transferase and terpene cyclase activity, converting isopentenyl diphosphate and dimethylallyl diphosphate into geranylfarnesyl diphosphate (GFPP) and further converting GFPP into preasperterpenoid A, respectively (PubMed:30548032). The cytochrome P450 monooxygenase astB then dually oxidizes preasperterpenoid A to produce asperterpenoid A along with a minor product, asperterpenoid B (PubMed:30548032). Finally, the cytochrome P450 monooxygenase astA converts asperterpenoid A into asperterpenoid C (PubMed:30548032).</text>
</comment>
<comment type="catalytic activity">
    <reaction evidence="6">
        <text>(2E,6E,10E,14E)-geranylfarnesyl diphosphate = preasperterpenoid A + diphosphate</text>
        <dbReference type="Rhea" id="RHEA:66832"/>
        <dbReference type="ChEBI" id="CHEBI:33019"/>
        <dbReference type="ChEBI" id="CHEBI:57907"/>
        <dbReference type="ChEBI" id="CHEBI:167511"/>
    </reaction>
    <physiologicalReaction direction="left-to-right" evidence="6">
        <dbReference type="Rhea" id="RHEA:66833"/>
    </physiologicalReaction>
</comment>
<comment type="cofactor">
    <cofactor evidence="2 3">
        <name>Mg(2+)</name>
        <dbReference type="ChEBI" id="CHEBI:18420"/>
    </cofactor>
    <text evidence="2 3">Binds 4 Mg(2+) ions per subunit.</text>
</comment>
<comment type="pathway">
    <text evidence="6">Secondary metabolite biosynthesis; terpenoid biosynthesis.</text>
</comment>
<comment type="biotechnology">
    <text evidence="6">Asperterpenoids A and B, but not the final product asperterpenoid C, exhibit potent inhibitory activity against Mycobacterium tuberculosis protein tyrosine phosphatase B with IC(50) values of 3 to 6 uM.</text>
</comment>
<comment type="similarity">
    <text evidence="8">In the N-terminal section; belongs to the terpene synthase family.</text>
</comment>
<comment type="similarity">
    <text evidence="8">In the C-terminal section; belongs to the FPP/GGPP synthase family.</text>
</comment>
<accession>A0A3Q9FFM1</accession>
<keyword id="KW-0414">Isoprene biosynthesis</keyword>
<keyword id="KW-0456">Lyase</keyword>
<keyword id="KW-0460">Magnesium</keyword>
<keyword id="KW-0479">Metal-binding</keyword>
<keyword id="KW-0511">Multifunctional enzyme</keyword>
<keyword id="KW-0732">Signal</keyword>
<keyword id="KW-0808">Transferase</keyword>
<evidence type="ECO:0000250" key="1">
    <source>
        <dbReference type="UniProtKB" id="A1C8C3"/>
    </source>
</evidence>
<evidence type="ECO:0000250" key="2">
    <source>
        <dbReference type="UniProtKB" id="Q12051"/>
    </source>
</evidence>
<evidence type="ECO:0000250" key="3">
    <source>
        <dbReference type="UniProtKB" id="Q40577"/>
    </source>
</evidence>
<evidence type="ECO:0000255" key="4"/>
<evidence type="ECO:0000256" key="5">
    <source>
        <dbReference type="SAM" id="MobiDB-lite"/>
    </source>
</evidence>
<evidence type="ECO:0000269" key="6">
    <source>
    </source>
</evidence>
<evidence type="ECO:0000303" key="7">
    <source>
    </source>
</evidence>
<evidence type="ECO:0000305" key="8"/>
<sequence>MASLEVFVLYLRIFFISFMSRARSLFSFVTSPAITAEHGKVQKLQAKPGSDRAPDSWIQYRHSKLVDPSTYNDLGLCGGLPLRVHKHAHLADKGARRAQEDWKRLVGPIRNFTGCLSPRFNGIAVAIPECIPERLEAVTYANEFAFLHDDILDTVGKEDGEEENNEMARGFESVLEPSRNVKMSVSGKSQMQAKLILELLDLDESQAMVLLKSWEGLVKGESGSQHFDFQSLDEYLPHRVVNLGQTFWFGIITFAMGLTVSNEEMELTKPITEPAYATLALANDFFSWEKEYVEFQGNPTSGNMANAVWIIMKEHSVDLEEAKVICQDKIRESCEEYRRRKREFELQSAEQVSIDAHRYLSALEFSISGNVVWSQYTERYHFHKPEHWRQVENVDDDGNKSDDSGIAMKDSPESTVVDVEDNVPSTFLNFGSSGTNIRSKKTLVSPVLETKLPEMTNQVVLAPFQYVSSLPSKKVRHHAIDALNIWFSVPEADLNMIKDAIDQLHNASLMLDDIEDNSPLRRGHPSTHMIYGISQTINSANNLFVMSLDTIRQLKSPDCLDVFISELKRLHIGQSLDLFWTSNVQCPTLEEYYKMVDYKTGGLFQMVAKLMGAKSPKSKRKVPDVSTLTTLFGRYFQIRDDYQNLMSKEYTDQKGFCEDLDEGKFSLPLIHCLTTSPNIRLQSILHQRKTMGKMSFETKKLVLDHLEETKSLEYTKEMLDCLHVRLHKELDVLEKQTGVNNFLLRLLLKRLHVK</sequence>
<feature type="signal peptide" evidence="4">
    <location>
        <begin position="1"/>
        <end position="24"/>
    </location>
</feature>
<feature type="chain" id="PRO_5018734944" description="Bifunctional sesterterpene synthase astC">
    <location>
        <begin position="25"/>
        <end position="754"/>
    </location>
</feature>
<feature type="region of interest" description="Sesterterpene synthase" evidence="1">
    <location>
        <begin position="58"/>
        <end position="388"/>
    </location>
</feature>
<feature type="region of interest" description="Geranylfarnesyl diphosphate synthase" evidence="1">
    <location>
        <begin position="389"/>
        <end position="753"/>
    </location>
</feature>
<feature type="region of interest" description="Disordered" evidence="5">
    <location>
        <begin position="392"/>
        <end position="414"/>
    </location>
</feature>
<feature type="compositionally biased region" description="Basic and acidic residues" evidence="5">
    <location>
        <begin position="392"/>
        <end position="403"/>
    </location>
</feature>
<feature type="binding site" evidence="3">
    <location>
        <position position="149"/>
    </location>
    <ligand>
        <name>Mg(2+)</name>
        <dbReference type="ChEBI" id="CHEBI:18420"/>
        <label>1</label>
    </ligand>
</feature>
<feature type="binding site" evidence="3">
    <location>
        <position position="149"/>
    </location>
    <ligand>
        <name>Mg(2+)</name>
        <dbReference type="ChEBI" id="CHEBI:18420"/>
        <label>2</label>
    </ligand>
</feature>
<feature type="binding site" evidence="3">
    <location>
        <position position="153"/>
    </location>
    <ligand>
        <name>Mg(2+)</name>
        <dbReference type="ChEBI" id="CHEBI:18420"/>
        <label>1</label>
    </ligand>
</feature>
<feature type="binding site" evidence="3">
    <location>
        <position position="153"/>
    </location>
    <ligand>
        <name>Mg(2+)</name>
        <dbReference type="ChEBI" id="CHEBI:18420"/>
        <label>2</label>
    </ligand>
</feature>
<feature type="binding site" evidence="2">
    <location>
        <position position="512"/>
    </location>
    <ligand>
        <name>Mg(2+)</name>
        <dbReference type="ChEBI" id="CHEBI:18420"/>
        <label>3</label>
    </ligand>
</feature>
<feature type="binding site" evidence="2">
    <location>
        <position position="512"/>
    </location>
    <ligand>
        <name>Mg(2+)</name>
        <dbReference type="ChEBI" id="CHEBI:18420"/>
        <label>4</label>
    </ligand>
</feature>
<feature type="binding site" evidence="2">
    <location>
        <position position="516"/>
    </location>
    <ligand>
        <name>Mg(2+)</name>
        <dbReference type="ChEBI" id="CHEBI:18420"/>
        <label>3</label>
    </ligand>
</feature>
<feature type="binding site" evidence="2">
    <location>
        <position position="516"/>
    </location>
    <ligand>
        <name>Mg(2+)</name>
        <dbReference type="ChEBI" id="CHEBI:18420"/>
        <label>4</label>
    </ligand>
</feature>
<protein>
    <recommendedName>
        <fullName evidence="7">Bifunctional sesterterpene synthase astC</fullName>
        <ecNumber evidence="6">4.2.3.-</ecNumber>
    </recommendedName>
    <alternativeName>
        <fullName evidence="7">Asperterpenoid biosynthesis cluster protein C</fullName>
    </alternativeName>
</protein>
<gene>
    <name evidence="7" type="primary">astC</name>
    <name evidence="7" type="synonym">aspC</name>
</gene>
<organism>
    <name type="scientific">Talaromyces wortmannii</name>
    <name type="common">Penicillium wortmannii</name>
    <dbReference type="NCBI Taxonomy" id="28567"/>
    <lineage>
        <taxon>Eukaryota</taxon>
        <taxon>Fungi</taxon>
        <taxon>Dikarya</taxon>
        <taxon>Ascomycota</taxon>
        <taxon>Pezizomycotina</taxon>
        <taxon>Eurotiomycetes</taxon>
        <taxon>Eurotiomycetidae</taxon>
        <taxon>Eurotiales</taxon>
        <taxon>Trichocomaceae</taxon>
        <taxon>Talaromyces</taxon>
        <taxon>Talaromyces sect. Islandici</taxon>
    </lineage>
</organism>
<reference key="1">
    <citation type="journal article" date="2019" name="Org. Biomol. Chem.">
        <title>Biosynthesis of an anti-tuberculosis sesterterpenoid asperterpenoid A.</title>
        <authorList>
            <person name="Huang J.H."/>
            <person name="Lv J.M."/>
            <person name="Wang Q.Z."/>
            <person name="Zou J."/>
            <person name="Lu Y.J."/>
            <person name="Wang Q.L."/>
            <person name="Chen D.N."/>
            <person name="Yao X.S."/>
            <person name="Gao H."/>
            <person name="Hu D."/>
        </authorList>
    </citation>
    <scope>NUCLEOTIDE SEQUENCE [GENOMIC DNA]</scope>
    <scope>FUNCTION</scope>
    <scope>CATALYTIC ACTIVITY</scope>
    <scope>PATHWAY</scope>
    <scope>BIOTECHNOLOGY</scope>
    <source>
        <strain>ATCC 26942 / CBS 387.67 / CCM F-175 / VKM F-2091</strain>
    </source>
</reference>